<accession>Q8C6M1</accession>
<accession>Q69ZT5</accession>
<accession>Q8CJ72</accession>
<feature type="chain" id="PRO_0000390418" description="Ubiquitin carboxyl-terminal hydrolase 20">
    <location>
        <begin position="1"/>
        <end position="916"/>
    </location>
</feature>
<feature type="domain" description="USP">
    <location>
        <begin position="145"/>
        <end position="687"/>
    </location>
</feature>
<feature type="domain" description="DUSP 1" evidence="4">
    <location>
        <begin position="689"/>
        <end position="782"/>
    </location>
</feature>
<feature type="domain" description="DUSP 2" evidence="4">
    <location>
        <begin position="791"/>
        <end position="894"/>
    </location>
</feature>
<feature type="zinc finger region" description="UBP-type" evidence="3">
    <location>
        <begin position="6"/>
        <end position="111"/>
    </location>
</feature>
<feature type="region of interest" description="Disordered" evidence="7">
    <location>
        <begin position="258"/>
        <end position="420"/>
    </location>
</feature>
<feature type="compositionally biased region" description="Basic and acidic residues" evidence="7">
    <location>
        <begin position="260"/>
        <end position="280"/>
    </location>
</feature>
<feature type="compositionally biased region" description="Basic and acidic residues" evidence="7">
    <location>
        <begin position="317"/>
        <end position="333"/>
    </location>
</feature>
<feature type="active site" description="Nucleophile" evidence="5 6">
    <location>
        <position position="154"/>
    </location>
</feature>
<feature type="active site" description="Proton acceptor" evidence="5 6">
    <location>
        <position position="645"/>
    </location>
</feature>
<feature type="binding site" evidence="3">
    <location>
        <position position="8"/>
    </location>
    <ligand>
        <name>Zn(2+)</name>
        <dbReference type="ChEBI" id="CHEBI:29105"/>
        <label>1</label>
    </ligand>
</feature>
<feature type="binding site" evidence="3">
    <location>
        <position position="10"/>
    </location>
    <ligand>
        <name>Zn(2+)</name>
        <dbReference type="ChEBI" id="CHEBI:29105"/>
        <label>1</label>
    </ligand>
</feature>
<feature type="binding site" evidence="3">
    <location>
        <position position="30"/>
    </location>
    <ligand>
        <name>Zn(2+)</name>
        <dbReference type="ChEBI" id="CHEBI:29105"/>
        <label>2</label>
    </ligand>
</feature>
<feature type="binding site" evidence="3">
    <location>
        <position position="33"/>
    </location>
    <ligand>
        <name>Zn(2+)</name>
        <dbReference type="ChEBI" id="CHEBI:29105"/>
        <label>2</label>
    </ligand>
</feature>
<feature type="binding site" evidence="3">
    <location>
        <position position="43"/>
    </location>
    <ligand>
        <name>Zn(2+)</name>
        <dbReference type="ChEBI" id="CHEBI:29105"/>
        <label>3</label>
    </ligand>
</feature>
<feature type="binding site" evidence="3">
    <location>
        <position position="48"/>
    </location>
    <ligand>
        <name>Zn(2+)</name>
        <dbReference type="ChEBI" id="CHEBI:29105"/>
        <label>3</label>
    </ligand>
</feature>
<feature type="binding site" evidence="3">
    <location>
        <position position="53"/>
    </location>
    <ligand>
        <name>Zn(2+)</name>
        <dbReference type="ChEBI" id="CHEBI:29105"/>
        <label>2</label>
    </ligand>
</feature>
<feature type="binding site" evidence="3">
    <location>
        <position position="60"/>
    </location>
    <ligand>
        <name>Zn(2+)</name>
        <dbReference type="ChEBI" id="CHEBI:29105"/>
        <label>2</label>
    </ligand>
</feature>
<feature type="binding site" evidence="3">
    <location>
        <position position="64"/>
    </location>
    <ligand>
        <name>Zn(2+)</name>
        <dbReference type="ChEBI" id="CHEBI:29105"/>
        <label>3</label>
    </ligand>
</feature>
<feature type="binding site" evidence="3">
    <location>
        <position position="70"/>
    </location>
    <ligand>
        <name>Zn(2+)</name>
        <dbReference type="ChEBI" id="CHEBI:29105"/>
        <label>3</label>
    </ligand>
</feature>
<feature type="binding site" evidence="3">
    <location>
        <position position="83"/>
    </location>
    <ligand>
        <name>Zn(2+)</name>
        <dbReference type="ChEBI" id="CHEBI:29105"/>
        <label>1</label>
    </ligand>
</feature>
<feature type="binding site" evidence="3">
    <location>
        <position position="86"/>
    </location>
    <ligand>
        <name>Zn(2+)</name>
        <dbReference type="ChEBI" id="CHEBI:29105"/>
        <label>1</label>
    </ligand>
</feature>
<feature type="modified residue" description="Phosphoserine" evidence="2">
    <location>
        <position position="112"/>
    </location>
</feature>
<feature type="modified residue" description="Phosphoserine" evidence="11 12">
    <location>
        <position position="132"/>
    </location>
</feature>
<feature type="modified residue" description="Phosphoserine" evidence="2">
    <location>
        <position position="134"/>
    </location>
</feature>
<feature type="modified residue" description="Phosphothreonine" evidence="2">
    <location>
        <position position="259"/>
    </location>
</feature>
<feature type="modified residue" description="Phosphoserine" evidence="2">
    <location>
        <position position="306"/>
    </location>
</feature>
<feature type="modified residue" description="Phosphoserine" evidence="10">
    <location>
        <position position="369"/>
    </location>
</feature>
<feature type="modified residue" description="Phosphothreonine" evidence="11">
    <location>
        <position position="378"/>
    </location>
</feature>
<feature type="modified residue" description="Phosphoserine" evidence="2">
    <location>
        <position position="410"/>
    </location>
</feature>
<feature type="modified residue" description="Phosphoserine" evidence="2">
    <location>
        <position position="415"/>
    </location>
</feature>
<feature type="sequence conflict" description="In Ref. 1; AAN15803." evidence="9" ref="1">
    <original>H</original>
    <variation>T</variation>
    <location>
        <position position="117"/>
    </location>
</feature>
<feature type="sequence conflict" description="In Ref. 1; AAN15803." evidence="9" ref="1">
    <original>E</original>
    <variation>D</variation>
    <location>
        <position position="380"/>
    </location>
</feature>
<keyword id="KW-0963">Cytoplasm</keyword>
<keyword id="KW-0206">Cytoskeleton</keyword>
<keyword id="KW-0254">Endocytosis</keyword>
<keyword id="KW-0256">Endoplasmic reticulum</keyword>
<keyword id="KW-0378">Hydrolase</keyword>
<keyword id="KW-0479">Metal-binding</keyword>
<keyword id="KW-0597">Phosphoprotein</keyword>
<keyword id="KW-0645">Protease</keyword>
<keyword id="KW-1185">Reference proteome</keyword>
<keyword id="KW-0677">Repeat</keyword>
<keyword id="KW-0788">Thiol protease</keyword>
<keyword id="KW-0832">Ubl conjugation</keyword>
<keyword id="KW-0833">Ubl conjugation pathway</keyword>
<keyword id="KW-0862">Zinc</keyword>
<keyword id="KW-0863">Zinc-finger</keyword>
<proteinExistence type="evidence at protein level"/>
<organism>
    <name type="scientific">Mus musculus</name>
    <name type="common">Mouse</name>
    <dbReference type="NCBI Taxonomy" id="10090"/>
    <lineage>
        <taxon>Eukaryota</taxon>
        <taxon>Metazoa</taxon>
        <taxon>Chordata</taxon>
        <taxon>Craniata</taxon>
        <taxon>Vertebrata</taxon>
        <taxon>Euteleostomi</taxon>
        <taxon>Mammalia</taxon>
        <taxon>Eutheria</taxon>
        <taxon>Euarchontoglires</taxon>
        <taxon>Glires</taxon>
        <taxon>Rodentia</taxon>
        <taxon>Myomorpha</taxon>
        <taxon>Muroidea</taxon>
        <taxon>Muridae</taxon>
        <taxon>Murinae</taxon>
        <taxon>Mus</taxon>
        <taxon>Mus</taxon>
    </lineage>
</organism>
<name>UBP20_MOUSE</name>
<sequence length="916" mass="102140">MGDARDLCPHLDCIGEVTKEDLLLKSKGTCQSCGVAGPNLWACLQVTCPYVGCGESFADHSSIHAQVKKHNLTVNLTTFRVWCYACEREVFLEQRLAVHLASSSARLSEQDSPPPSHPLKAVPIAVADEGESESEDDDLKPRGLTGMKNLGNSCYMNAALQALSNCPPLTQFFLECGGLVRTDKKPALCKSYQKLISEVWHKKRPSYVVPTSLSHGIKLVNPMFRGYAQQDTQEFLRCLMDQLHEELKEPMVAAVAALTDARDSDSSDTDERRDGDRSPSEDEFLSCDSSSDRGEGDGQGRGGGSSKAEMELLISDEAGRAISEKERMKDRKFSWGQQRTNSEQVDEDADVDTAMASLDEQSREAQPPSPRSTSPCQTPEPDNEAHIRSSSRPCSPVHHHHEGHSKLSSSPPRASPVRMGPSYVLKKAQVPSTGGRRRKEQSYRSVISDVFNGSVLSLVQCLTCDRVSTTVETFQDLSLPIPGKEDLAKLHSAIYQNVPAKPGACGDSYSSQGWLAFIVEYIRRFVVSCTPSWFWGPVVTLEDCLAAFFAADELKGDNMYSCERCKKLRNGVKYCKVLCLPEILCVHLKRFRHEVMYSFKVSSHVSFPLEGLDLRPFLAKECTSQVTTYDLLSVICHHGTAGSGHYIAYCQNVINGQWYEFDDQYVTEVHETVVQNVEAYVLFYRKSSEEAMRERQQVVSLAAMREPSLLRFYVSREWLNKFNTFAEPGPITNHTFLCSHGGIPPNKYHYIDDLVVILPQSVWEHLYSRFGGGPAVNHLYVCSICQVEIEALAKRRRVEIDTFIKLNKAFQAEESPAVIYCISMHWFREWEAFVKGKDSEPPGPIDNSRIAQVKGSGHIQLKQGADCGQISEETWTYLSSLYGGGPEIAIRQSVAQLPDPESLHGEQKIEAETRAL</sequence>
<protein>
    <recommendedName>
        <fullName>Ubiquitin carboxyl-terminal hydrolase 20</fullName>
        <ecNumber>3.4.19.12</ecNumber>
    </recommendedName>
    <alternativeName>
        <fullName>Deubiquitinating enzyme 20</fullName>
    </alternativeName>
    <alternativeName>
        <fullName>Ubiquitin thioesterase 20</fullName>
    </alternativeName>
    <alternativeName>
        <fullName>Ubiquitin-specific-processing protease 20</fullName>
    </alternativeName>
    <alternativeName>
        <fullName>VHL-interacting deubiquitinating enzyme 2</fullName>
    </alternativeName>
</protein>
<comment type="function">
    <text evidence="2">Deubiquitinating enzyme that plays a role in many cellular processes including autophagy, cellular antiviral response or membrane protein biogenesis. Attenuates TLR4-mediated NF-kappa-B signaling by cooperating with beta-arrestin-2/ARRB2 and inhibiting TRAF6 autoubiquitination. Promotes cellular antiviral responses by deconjugating 'Lys-33' and 'Lys-48'-linked ubiquitination of STING1 leading to its stabilization. Plays an essential role in autophagy induction by regulating the ULK1 stability through deubiquitination of ULK1. Acts as a positive regulator for NF-kappa-B activation by TNF-alpha through deubiquitinating 'Lys-48'-linked polyubiquitination of SQSTM1, leading to its increased stability. Acts as a regulator of G-protein coupled receptor (GPCR) signaling by mediating the deubiquitination beta-2 adrenergic receptor (ADRB2). Plays a central role in ADRB2 recycling and resensitization after prolonged agonist stimulation by constitutively binding ADRB2, mediating deubiquitination of ADRB2 and inhibiting lysosomal trafficking of ADRB2. Upon dissociation, it is probably transferred to the translocated beta-arrestins, possibly leading to beta-arrestins deubiquitination and disengagement from ADRB2. This suggests the existence of a dynamic exchange between the ADRB2 and beta-arrestins. Deubiquitinates DIO2, thereby regulating thyroid hormone regulation. Deubiquitinates HIF1A, leading to stabilize HIF1A and enhance HIF1A-mediated activity. Deubiquitinates MCL1, a pivotal member of the anti-apoptotic Bcl-2 protein family to regulate its stability. Within the endoplasmic reticulum, participates with USP33 in the rescue of post-translationally targeted membrane proteins that are inappropriately ubiquitinated by the cytosolic protein quality control in the cytosol.</text>
</comment>
<comment type="catalytic activity">
    <reaction evidence="2">
        <text>Thiol-dependent hydrolysis of ester, thioester, amide, peptide and isopeptide bonds formed by the C-terminal Gly of ubiquitin (a 76-residue protein attached to proteins as an intracellular targeting signal).</text>
        <dbReference type="EC" id="3.4.19.12"/>
    </reaction>
</comment>
<comment type="subunit">
    <text evidence="2">Interacts with VHL, leading to its ubiquitination and subsequent degradation. Interacts with CCP110. Interacts with DIO2. Interacts with HIF1A. Interacts with ADRB2. Interacts with USP18.</text>
</comment>
<comment type="subcellular location">
    <subcellularLocation>
        <location evidence="8">Cytoplasm</location>
    </subcellularLocation>
    <subcellularLocation>
        <location evidence="2">Endoplasmic reticulum</location>
    </subcellularLocation>
    <subcellularLocation>
        <location evidence="2">Cytoplasm</location>
        <location evidence="2">Perinuclear region</location>
    </subcellularLocation>
    <subcellularLocation>
        <location evidence="2">Cytoplasm</location>
        <location evidence="2">Cytoskeleton</location>
        <location evidence="2">Microtubule organizing center</location>
        <location evidence="2">Centrosome</location>
    </subcellularLocation>
</comment>
<comment type="domain">
    <text evidence="1">The UBP-type zinc finger binds 3 zinc ions. However, it does not bind ubiquitin, probably because the conserved Arg in position 55 is replaced by a Glu residue (By similarity).</text>
</comment>
<comment type="PTM">
    <text evidence="1">Ubiquitinated via a VHL-dependent pathway for proteasomal degradation.</text>
</comment>
<comment type="disruption phenotype">
    <text evidence="8">USP20-deletion mice produce decreased type I IFNs and proinflammatory cytokines and exhibit increased susceptibility to lethal viral infection compared with WT mice.</text>
</comment>
<comment type="similarity">
    <text evidence="9">Belongs to the peptidase C19 family. USP20/USP33 subfamily.</text>
</comment>
<comment type="sequence caution" evidence="9">
    <conflict type="erroneous initiation">
        <sequence resource="EMBL-CDS" id="BAD32361"/>
    </conflict>
</comment>
<gene>
    <name type="primary">Usp20</name>
    <name type="synonym">Kiaa1003</name>
    <name type="synonym">Vdu2</name>
</gene>
<dbReference type="EC" id="3.4.19.12"/>
<dbReference type="EMBL" id="AF449715">
    <property type="protein sequence ID" value="AAN15803.1"/>
    <property type="molecule type" value="mRNA"/>
</dbReference>
<dbReference type="EMBL" id="AK173083">
    <property type="protein sequence ID" value="BAD32361.1"/>
    <property type="status" value="ALT_INIT"/>
    <property type="molecule type" value="mRNA"/>
</dbReference>
<dbReference type="EMBL" id="AK054279">
    <property type="protein sequence ID" value="BAC35715.1"/>
    <property type="molecule type" value="mRNA"/>
</dbReference>
<dbReference type="EMBL" id="AK163663">
    <property type="protein sequence ID" value="BAE37447.1"/>
    <property type="molecule type" value="mRNA"/>
</dbReference>
<dbReference type="EMBL" id="AL844546">
    <property type="status" value="NOT_ANNOTATED_CDS"/>
    <property type="molecule type" value="Genomic_DNA"/>
</dbReference>
<dbReference type="EMBL" id="CH466542">
    <property type="protein sequence ID" value="EDL08500.1"/>
    <property type="molecule type" value="Genomic_DNA"/>
</dbReference>
<dbReference type="EMBL" id="BC079674">
    <property type="protein sequence ID" value="AAH79674.1"/>
    <property type="molecule type" value="mRNA"/>
</dbReference>
<dbReference type="CCDS" id="CCDS15893.1"/>
<dbReference type="RefSeq" id="NP_083122.1">
    <property type="nucleotide sequence ID" value="NM_028846.5"/>
</dbReference>
<dbReference type="RefSeq" id="XP_030107995.1">
    <property type="nucleotide sequence ID" value="XM_030252135.1"/>
</dbReference>
<dbReference type="BioGRID" id="216621">
    <property type="interactions" value="7"/>
</dbReference>
<dbReference type="FunCoup" id="Q8C6M1">
    <property type="interactions" value="653"/>
</dbReference>
<dbReference type="IntAct" id="Q8C6M1">
    <property type="interactions" value="1"/>
</dbReference>
<dbReference type="STRING" id="10090.ENSMUSP00000099913"/>
<dbReference type="MEROPS" id="C19.025"/>
<dbReference type="iPTMnet" id="Q8C6M1"/>
<dbReference type="PhosphoSitePlus" id="Q8C6M1"/>
<dbReference type="jPOST" id="Q8C6M1"/>
<dbReference type="PaxDb" id="10090-ENSMUSP00000099913"/>
<dbReference type="PeptideAtlas" id="Q8C6M1"/>
<dbReference type="ProteomicsDB" id="298456"/>
<dbReference type="Pumba" id="Q8C6M1"/>
<dbReference type="Antibodypedia" id="1730">
    <property type="antibodies" value="318 antibodies from 30 providers"/>
</dbReference>
<dbReference type="DNASU" id="74270"/>
<dbReference type="Ensembl" id="ENSMUST00000102849.11">
    <property type="protein sequence ID" value="ENSMUSP00000099913.5"/>
    <property type="gene ID" value="ENSMUSG00000026854.17"/>
</dbReference>
<dbReference type="Ensembl" id="ENSMUST00000170476.8">
    <property type="protein sequence ID" value="ENSMUSP00000127388.2"/>
    <property type="gene ID" value="ENSMUSG00000026854.17"/>
</dbReference>
<dbReference type="GeneID" id="74270"/>
<dbReference type="KEGG" id="mmu:74270"/>
<dbReference type="UCSC" id="uc008jde.2">
    <property type="organism name" value="mouse"/>
</dbReference>
<dbReference type="AGR" id="MGI:1921520"/>
<dbReference type="CTD" id="10868"/>
<dbReference type="MGI" id="MGI:1921520">
    <property type="gene designation" value="Usp20"/>
</dbReference>
<dbReference type="VEuPathDB" id="HostDB:ENSMUSG00000026854"/>
<dbReference type="eggNOG" id="KOG1870">
    <property type="taxonomic scope" value="Eukaryota"/>
</dbReference>
<dbReference type="GeneTree" id="ENSGT00940000158829"/>
<dbReference type="HOGENOM" id="CLU_004896_0_0_1"/>
<dbReference type="InParanoid" id="Q8C6M1"/>
<dbReference type="OMA" id="IDQDDEC"/>
<dbReference type="OrthoDB" id="73004at2759"/>
<dbReference type="PhylomeDB" id="Q8C6M1"/>
<dbReference type="TreeFam" id="TF352179"/>
<dbReference type="Reactome" id="R-MMU-5689880">
    <property type="pathway name" value="Ub-specific processing proteases"/>
</dbReference>
<dbReference type="BioGRID-ORCS" id="74270">
    <property type="hits" value="8 hits in 79 CRISPR screens"/>
</dbReference>
<dbReference type="ChiTaRS" id="Usp20">
    <property type="organism name" value="mouse"/>
</dbReference>
<dbReference type="PRO" id="PR:Q8C6M1"/>
<dbReference type="Proteomes" id="UP000000589">
    <property type="component" value="Chromosome 2"/>
</dbReference>
<dbReference type="RNAct" id="Q8C6M1">
    <property type="molecule type" value="protein"/>
</dbReference>
<dbReference type="Bgee" id="ENSMUSG00000026854">
    <property type="expression patterns" value="Expressed in spermatid and 251 other cell types or tissues"/>
</dbReference>
<dbReference type="ExpressionAtlas" id="Q8C6M1">
    <property type="expression patterns" value="baseline and differential"/>
</dbReference>
<dbReference type="GO" id="GO:0005813">
    <property type="term" value="C:centrosome"/>
    <property type="evidence" value="ECO:0000250"/>
    <property type="project" value="UniProtKB"/>
</dbReference>
<dbReference type="GO" id="GO:0005783">
    <property type="term" value="C:endoplasmic reticulum"/>
    <property type="evidence" value="ECO:0007669"/>
    <property type="project" value="UniProtKB-SubCell"/>
</dbReference>
<dbReference type="GO" id="GO:0048471">
    <property type="term" value="C:perinuclear region of cytoplasm"/>
    <property type="evidence" value="ECO:0007669"/>
    <property type="project" value="UniProtKB-SubCell"/>
</dbReference>
<dbReference type="GO" id="GO:0004843">
    <property type="term" value="F:cysteine-type deubiquitinase activity"/>
    <property type="evidence" value="ECO:0000250"/>
    <property type="project" value="UniProtKB"/>
</dbReference>
<dbReference type="GO" id="GO:0004197">
    <property type="term" value="F:cysteine-type endopeptidase activity"/>
    <property type="evidence" value="ECO:0000250"/>
    <property type="project" value="UniProtKB"/>
</dbReference>
<dbReference type="GO" id="GO:0001664">
    <property type="term" value="F:G protein-coupled receptor binding"/>
    <property type="evidence" value="ECO:0007669"/>
    <property type="project" value="Ensembl"/>
</dbReference>
<dbReference type="GO" id="GO:0008270">
    <property type="term" value="F:zinc ion binding"/>
    <property type="evidence" value="ECO:0007669"/>
    <property type="project" value="UniProtKB-KW"/>
</dbReference>
<dbReference type="GO" id="GO:0140374">
    <property type="term" value="P:antiviral innate immune response"/>
    <property type="evidence" value="ECO:0007669"/>
    <property type="project" value="Ensembl"/>
</dbReference>
<dbReference type="GO" id="GO:0006897">
    <property type="term" value="P:endocytosis"/>
    <property type="evidence" value="ECO:0007669"/>
    <property type="project" value="UniProtKB-KW"/>
</dbReference>
<dbReference type="GO" id="GO:0043124">
    <property type="term" value="P:negative regulation of canonical NF-kappaB signal transduction"/>
    <property type="evidence" value="ECO:0007669"/>
    <property type="project" value="Ensembl"/>
</dbReference>
<dbReference type="GO" id="GO:0010508">
    <property type="term" value="P:positive regulation of autophagy"/>
    <property type="evidence" value="ECO:0007669"/>
    <property type="project" value="Ensembl"/>
</dbReference>
<dbReference type="GO" id="GO:0016579">
    <property type="term" value="P:protein deubiquitination"/>
    <property type="evidence" value="ECO:0000250"/>
    <property type="project" value="UniProtKB"/>
</dbReference>
<dbReference type="GO" id="GO:0071108">
    <property type="term" value="P:protein K48-linked deubiquitination"/>
    <property type="evidence" value="ECO:0000250"/>
    <property type="project" value="UniProtKB"/>
</dbReference>
<dbReference type="GO" id="GO:0070536">
    <property type="term" value="P:protein K63-linked deubiquitination"/>
    <property type="evidence" value="ECO:0000250"/>
    <property type="project" value="UniProtKB"/>
</dbReference>
<dbReference type="GO" id="GO:0006508">
    <property type="term" value="P:proteolysis"/>
    <property type="evidence" value="ECO:0007669"/>
    <property type="project" value="UniProtKB-KW"/>
</dbReference>
<dbReference type="GO" id="GO:0008277">
    <property type="term" value="P:regulation of G protein-coupled receptor signaling pathway"/>
    <property type="evidence" value="ECO:0000250"/>
    <property type="project" value="UniProtKB"/>
</dbReference>
<dbReference type="CDD" id="cd02674">
    <property type="entry name" value="Peptidase_C19R"/>
    <property type="match status" value="1"/>
</dbReference>
<dbReference type="FunFam" id="3.30.2230.10:FF:000001">
    <property type="entry name" value="Ubiquitinyl hydrolase 1"/>
    <property type="match status" value="1"/>
</dbReference>
<dbReference type="FunFam" id="3.30.2230.10:FF:000002">
    <property type="entry name" value="Ubiquitinyl hydrolase 1"/>
    <property type="match status" value="1"/>
</dbReference>
<dbReference type="FunFam" id="3.30.40.10:FF:000065">
    <property type="entry name" value="Ubiquitinyl hydrolase 1"/>
    <property type="match status" value="1"/>
</dbReference>
<dbReference type="FunFam" id="3.90.70.10:FF:000120">
    <property type="entry name" value="Ubiquitinyl hydrolase 1"/>
    <property type="match status" value="1"/>
</dbReference>
<dbReference type="Gene3D" id="3.90.70.10">
    <property type="entry name" value="Cysteine proteinases"/>
    <property type="match status" value="2"/>
</dbReference>
<dbReference type="Gene3D" id="3.30.2230.10">
    <property type="entry name" value="DUSP-like"/>
    <property type="match status" value="2"/>
</dbReference>
<dbReference type="Gene3D" id="3.30.40.10">
    <property type="entry name" value="Zinc/RING finger domain, C3HC4 (zinc finger)"/>
    <property type="match status" value="1"/>
</dbReference>
<dbReference type="InterPro" id="IPR035927">
    <property type="entry name" value="DUSP-like_sf"/>
</dbReference>
<dbReference type="InterPro" id="IPR038765">
    <property type="entry name" value="Papain-like_cys_pep_sf"/>
</dbReference>
<dbReference type="InterPro" id="IPR006615">
    <property type="entry name" value="Pept_C19_DUSP"/>
</dbReference>
<dbReference type="InterPro" id="IPR001394">
    <property type="entry name" value="Peptidase_C19_UCH"/>
</dbReference>
<dbReference type="InterPro" id="IPR050185">
    <property type="entry name" value="Ub_carboxyl-term_hydrolase"/>
</dbReference>
<dbReference type="InterPro" id="IPR018200">
    <property type="entry name" value="USP_CS"/>
</dbReference>
<dbReference type="InterPro" id="IPR028889">
    <property type="entry name" value="USP_dom"/>
</dbReference>
<dbReference type="InterPro" id="IPR013083">
    <property type="entry name" value="Znf_RING/FYVE/PHD"/>
</dbReference>
<dbReference type="InterPro" id="IPR001607">
    <property type="entry name" value="Znf_UBP"/>
</dbReference>
<dbReference type="PANTHER" id="PTHR21646">
    <property type="entry name" value="UBIQUITIN CARBOXYL-TERMINAL HYDROLASE"/>
    <property type="match status" value="1"/>
</dbReference>
<dbReference type="PANTHER" id="PTHR21646:SF13">
    <property type="entry name" value="UBIQUITIN CARBOXYL-TERMINAL HYDROLASE 20"/>
    <property type="match status" value="1"/>
</dbReference>
<dbReference type="Pfam" id="PF06337">
    <property type="entry name" value="DUSP"/>
    <property type="match status" value="2"/>
</dbReference>
<dbReference type="Pfam" id="PF00443">
    <property type="entry name" value="UCH"/>
    <property type="match status" value="1"/>
</dbReference>
<dbReference type="Pfam" id="PF02148">
    <property type="entry name" value="zf-UBP"/>
    <property type="match status" value="1"/>
</dbReference>
<dbReference type="SMART" id="SM00695">
    <property type="entry name" value="DUSP"/>
    <property type="match status" value="2"/>
</dbReference>
<dbReference type="SMART" id="SM00290">
    <property type="entry name" value="ZnF_UBP"/>
    <property type="match status" value="1"/>
</dbReference>
<dbReference type="SUPFAM" id="SSF54001">
    <property type="entry name" value="Cysteine proteinases"/>
    <property type="match status" value="1"/>
</dbReference>
<dbReference type="SUPFAM" id="SSF143791">
    <property type="entry name" value="DUSP-like"/>
    <property type="match status" value="2"/>
</dbReference>
<dbReference type="SUPFAM" id="SSF57850">
    <property type="entry name" value="RING/U-box"/>
    <property type="match status" value="1"/>
</dbReference>
<dbReference type="PROSITE" id="PS51283">
    <property type="entry name" value="DUSP"/>
    <property type="match status" value="2"/>
</dbReference>
<dbReference type="PROSITE" id="PS00972">
    <property type="entry name" value="USP_1"/>
    <property type="match status" value="1"/>
</dbReference>
<dbReference type="PROSITE" id="PS00973">
    <property type="entry name" value="USP_2"/>
    <property type="match status" value="1"/>
</dbReference>
<dbReference type="PROSITE" id="PS50235">
    <property type="entry name" value="USP_3"/>
    <property type="match status" value="1"/>
</dbReference>
<dbReference type="PROSITE" id="PS50271">
    <property type="entry name" value="ZF_UBP"/>
    <property type="match status" value="1"/>
</dbReference>
<evidence type="ECO:0000250" key="1"/>
<evidence type="ECO:0000250" key="2">
    <source>
        <dbReference type="UniProtKB" id="Q9Y2K6"/>
    </source>
</evidence>
<evidence type="ECO:0000255" key="3">
    <source>
        <dbReference type="PROSITE-ProRule" id="PRU00502"/>
    </source>
</evidence>
<evidence type="ECO:0000255" key="4">
    <source>
        <dbReference type="PROSITE-ProRule" id="PRU00613"/>
    </source>
</evidence>
<evidence type="ECO:0000255" key="5">
    <source>
        <dbReference type="PROSITE-ProRule" id="PRU10092"/>
    </source>
</evidence>
<evidence type="ECO:0000255" key="6">
    <source>
        <dbReference type="PROSITE-ProRule" id="PRU10093"/>
    </source>
</evidence>
<evidence type="ECO:0000256" key="7">
    <source>
        <dbReference type="SAM" id="MobiDB-lite"/>
    </source>
</evidence>
<evidence type="ECO:0000269" key="8">
    <source>
    </source>
</evidence>
<evidence type="ECO:0000305" key="9"/>
<evidence type="ECO:0007744" key="10">
    <source>
    </source>
</evidence>
<evidence type="ECO:0007744" key="11">
    <source>
    </source>
</evidence>
<evidence type="ECO:0007744" key="12">
    <source>
    </source>
</evidence>
<reference key="1">
    <citation type="journal article" date="2002" name="Biochem. Biophys. Res. Commun.">
        <title>Identification of a deubiquitinating enzyme subfamily as substrates of the von Hippel-Lindau tumor suppressor.</title>
        <authorList>
            <person name="Li Z."/>
            <person name="Wang D."/>
            <person name="Na X."/>
            <person name="Schoen S.R."/>
            <person name="Messing E.M."/>
            <person name="Wu G."/>
        </authorList>
    </citation>
    <scope>NUCLEOTIDE SEQUENCE [MRNA]</scope>
</reference>
<reference key="2">
    <citation type="journal article" date="2004" name="DNA Res.">
        <title>Prediction of the coding sequences of mouse homologues of KIAA gene: IV. The complete nucleotide sequences of 500 mouse KIAA-homologous cDNAs identified by screening of terminal sequences of cDNA clones randomly sampled from size-fractionated libraries.</title>
        <authorList>
            <person name="Okazaki N."/>
            <person name="Kikuno R."/>
            <person name="Ohara R."/>
            <person name="Inamoto S."/>
            <person name="Koseki H."/>
            <person name="Hiraoka S."/>
            <person name="Saga Y."/>
            <person name="Seino S."/>
            <person name="Nishimura M."/>
            <person name="Kaisho T."/>
            <person name="Hoshino K."/>
            <person name="Kitamura H."/>
            <person name="Nagase T."/>
            <person name="Ohara O."/>
            <person name="Koga H."/>
        </authorList>
    </citation>
    <scope>NUCLEOTIDE SEQUENCE [LARGE SCALE MRNA]</scope>
    <source>
        <tissue>Fetal brain</tissue>
    </source>
</reference>
<reference key="3">
    <citation type="journal article" date="2005" name="Science">
        <title>The transcriptional landscape of the mammalian genome.</title>
        <authorList>
            <person name="Carninci P."/>
            <person name="Kasukawa T."/>
            <person name="Katayama S."/>
            <person name="Gough J."/>
            <person name="Frith M.C."/>
            <person name="Maeda N."/>
            <person name="Oyama R."/>
            <person name="Ravasi T."/>
            <person name="Lenhard B."/>
            <person name="Wells C."/>
            <person name="Kodzius R."/>
            <person name="Shimokawa K."/>
            <person name="Bajic V.B."/>
            <person name="Brenner S.E."/>
            <person name="Batalov S."/>
            <person name="Forrest A.R."/>
            <person name="Zavolan M."/>
            <person name="Davis M.J."/>
            <person name="Wilming L.G."/>
            <person name="Aidinis V."/>
            <person name="Allen J.E."/>
            <person name="Ambesi-Impiombato A."/>
            <person name="Apweiler R."/>
            <person name="Aturaliya R.N."/>
            <person name="Bailey T.L."/>
            <person name="Bansal M."/>
            <person name="Baxter L."/>
            <person name="Beisel K.W."/>
            <person name="Bersano T."/>
            <person name="Bono H."/>
            <person name="Chalk A.M."/>
            <person name="Chiu K.P."/>
            <person name="Choudhary V."/>
            <person name="Christoffels A."/>
            <person name="Clutterbuck D.R."/>
            <person name="Crowe M.L."/>
            <person name="Dalla E."/>
            <person name="Dalrymple B.P."/>
            <person name="de Bono B."/>
            <person name="Della Gatta G."/>
            <person name="di Bernardo D."/>
            <person name="Down T."/>
            <person name="Engstrom P."/>
            <person name="Fagiolini M."/>
            <person name="Faulkner G."/>
            <person name="Fletcher C.F."/>
            <person name="Fukushima T."/>
            <person name="Furuno M."/>
            <person name="Futaki S."/>
            <person name="Gariboldi M."/>
            <person name="Georgii-Hemming P."/>
            <person name="Gingeras T.R."/>
            <person name="Gojobori T."/>
            <person name="Green R.E."/>
            <person name="Gustincich S."/>
            <person name="Harbers M."/>
            <person name="Hayashi Y."/>
            <person name="Hensch T.K."/>
            <person name="Hirokawa N."/>
            <person name="Hill D."/>
            <person name="Huminiecki L."/>
            <person name="Iacono M."/>
            <person name="Ikeo K."/>
            <person name="Iwama A."/>
            <person name="Ishikawa T."/>
            <person name="Jakt M."/>
            <person name="Kanapin A."/>
            <person name="Katoh M."/>
            <person name="Kawasawa Y."/>
            <person name="Kelso J."/>
            <person name="Kitamura H."/>
            <person name="Kitano H."/>
            <person name="Kollias G."/>
            <person name="Krishnan S.P."/>
            <person name="Kruger A."/>
            <person name="Kummerfeld S.K."/>
            <person name="Kurochkin I.V."/>
            <person name="Lareau L.F."/>
            <person name="Lazarevic D."/>
            <person name="Lipovich L."/>
            <person name="Liu J."/>
            <person name="Liuni S."/>
            <person name="McWilliam S."/>
            <person name="Madan Babu M."/>
            <person name="Madera M."/>
            <person name="Marchionni L."/>
            <person name="Matsuda H."/>
            <person name="Matsuzawa S."/>
            <person name="Miki H."/>
            <person name="Mignone F."/>
            <person name="Miyake S."/>
            <person name="Morris K."/>
            <person name="Mottagui-Tabar S."/>
            <person name="Mulder N."/>
            <person name="Nakano N."/>
            <person name="Nakauchi H."/>
            <person name="Ng P."/>
            <person name="Nilsson R."/>
            <person name="Nishiguchi S."/>
            <person name="Nishikawa S."/>
            <person name="Nori F."/>
            <person name="Ohara O."/>
            <person name="Okazaki Y."/>
            <person name="Orlando V."/>
            <person name="Pang K.C."/>
            <person name="Pavan W.J."/>
            <person name="Pavesi G."/>
            <person name="Pesole G."/>
            <person name="Petrovsky N."/>
            <person name="Piazza S."/>
            <person name="Reed J."/>
            <person name="Reid J.F."/>
            <person name="Ring B.Z."/>
            <person name="Ringwald M."/>
            <person name="Rost B."/>
            <person name="Ruan Y."/>
            <person name="Salzberg S.L."/>
            <person name="Sandelin A."/>
            <person name="Schneider C."/>
            <person name="Schoenbach C."/>
            <person name="Sekiguchi K."/>
            <person name="Semple C.A."/>
            <person name="Seno S."/>
            <person name="Sessa L."/>
            <person name="Sheng Y."/>
            <person name="Shibata Y."/>
            <person name="Shimada H."/>
            <person name="Shimada K."/>
            <person name="Silva D."/>
            <person name="Sinclair B."/>
            <person name="Sperling S."/>
            <person name="Stupka E."/>
            <person name="Sugiura K."/>
            <person name="Sultana R."/>
            <person name="Takenaka Y."/>
            <person name="Taki K."/>
            <person name="Tammoja K."/>
            <person name="Tan S.L."/>
            <person name="Tang S."/>
            <person name="Taylor M.S."/>
            <person name="Tegner J."/>
            <person name="Teichmann S.A."/>
            <person name="Ueda H.R."/>
            <person name="van Nimwegen E."/>
            <person name="Verardo R."/>
            <person name="Wei C.L."/>
            <person name="Yagi K."/>
            <person name="Yamanishi H."/>
            <person name="Zabarovsky E."/>
            <person name="Zhu S."/>
            <person name="Zimmer A."/>
            <person name="Hide W."/>
            <person name="Bult C."/>
            <person name="Grimmond S.M."/>
            <person name="Teasdale R.D."/>
            <person name="Liu E.T."/>
            <person name="Brusic V."/>
            <person name="Quackenbush J."/>
            <person name="Wahlestedt C."/>
            <person name="Mattick J.S."/>
            <person name="Hume D.A."/>
            <person name="Kai C."/>
            <person name="Sasaki D."/>
            <person name="Tomaru Y."/>
            <person name="Fukuda S."/>
            <person name="Kanamori-Katayama M."/>
            <person name="Suzuki M."/>
            <person name="Aoki J."/>
            <person name="Arakawa T."/>
            <person name="Iida J."/>
            <person name="Imamura K."/>
            <person name="Itoh M."/>
            <person name="Kato T."/>
            <person name="Kawaji H."/>
            <person name="Kawagashira N."/>
            <person name="Kawashima T."/>
            <person name="Kojima M."/>
            <person name="Kondo S."/>
            <person name="Konno H."/>
            <person name="Nakano K."/>
            <person name="Ninomiya N."/>
            <person name="Nishio T."/>
            <person name="Okada M."/>
            <person name="Plessy C."/>
            <person name="Shibata K."/>
            <person name="Shiraki T."/>
            <person name="Suzuki S."/>
            <person name="Tagami M."/>
            <person name="Waki K."/>
            <person name="Watahiki A."/>
            <person name="Okamura-Oho Y."/>
            <person name="Suzuki H."/>
            <person name="Kawai J."/>
            <person name="Hayashizaki Y."/>
        </authorList>
    </citation>
    <scope>NUCLEOTIDE SEQUENCE [LARGE SCALE MRNA]</scope>
    <source>
        <strain>C57BL/6J</strain>
        <tissue>Medulla oblongata</tissue>
        <tissue>Ovary</tissue>
    </source>
</reference>
<reference key="4">
    <citation type="journal article" date="2009" name="PLoS Biol.">
        <title>Lineage-specific biology revealed by a finished genome assembly of the mouse.</title>
        <authorList>
            <person name="Church D.M."/>
            <person name="Goodstadt L."/>
            <person name="Hillier L.W."/>
            <person name="Zody M.C."/>
            <person name="Goldstein S."/>
            <person name="She X."/>
            <person name="Bult C.J."/>
            <person name="Agarwala R."/>
            <person name="Cherry J.L."/>
            <person name="DiCuccio M."/>
            <person name="Hlavina W."/>
            <person name="Kapustin Y."/>
            <person name="Meric P."/>
            <person name="Maglott D."/>
            <person name="Birtle Z."/>
            <person name="Marques A.C."/>
            <person name="Graves T."/>
            <person name="Zhou S."/>
            <person name="Teague B."/>
            <person name="Potamousis K."/>
            <person name="Churas C."/>
            <person name="Place M."/>
            <person name="Herschleb J."/>
            <person name="Runnheim R."/>
            <person name="Forrest D."/>
            <person name="Amos-Landgraf J."/>
            <person name="Schwartz D.C."/>
            <person name="Cheng Z."/>
            <person name="Lindblad-Toh K."/>
            <person name="Eichler E.E."/>
            <person name="Ponting C.P."/>
        </authorList>
    </citation>
    <scope>NUCLEOTIDE SEQUENCE [LARGE SCALE GENOMIC DNA]</scope>
    <source>
        <strain>C57BL/6J</strain>
    </source>
</reference>
<reference key="5">
    <citation type="submission" date="2005-07" db="EMBL/GenBank/DDBJ databases">
        <authorList>
            <person name="Mural R.J."/>
            <person name="Adams M.D."/>
            <person name="Myers E.W."/>
            <person name="Smith H.O."/>
            <person name="Venter J.C."/>
        </authorList>
    </citation>
    <scope>NUCLEOTIDE SEQUENCE [LARGE SCALE GENOMIC DNA]</scope>
</reference>
<reference key="6">
    <citation type="journal article" date="2004" name="Genome Res.">
        <title>The status, quality, and expansion of the NIH full-length cDNA project: the Mammalian Gene Collection (MGC).</title>
        <authorList>
            <consortium name="The MGC Project Team"/>
        </authorList>
    </citation>
    <scope>NUCLEOTIDE SEQUENCE [LARGE SCALE MRNA]</scope>
    <source>
        <strain>C57BL/6J</strain>
        <tissue>Brain</tissue>
    </source>
</reference>
<reference key="7">
    <citation type="journal article" date="2004" name="Mol. Cell. Proteomics">
        <title>Phosphoproteomic analysis of the developing mouse brain.</title>
        <authorList>
            <person name="Ballif B.A."/>
            <person name="Villen J."/>
            <person name="Beausoleil S.A."/>
            <person name="Schwartz D."/>
            <person name="Gygi S.P."/>
        </authorList>
    </citation>
    <scope>PHOSPHORYLATION [LARGE SCALE ANALYSIS] AT SER-369</scope>
    <scope>IDENTIFICATION BY MASS SPECTROMETRY [LARGE SCALE ANALYSIS]</scope>
    <source>
        <tissue>Embryonic brain</tissue>
    </source>
</reference>
<reference key="8">
    <citation type="journal article" date="2007" name="Proc. Natl. Acad. Sci. U.S.A.">
        <title>Large-scale phosphorylation analysis of mouse liver.</title>
        <authorList>
            <person name="Villen J."/>
            <person name="Beausoleil S.A."/>
            <person name="Gerber S.A."/>
            <person name="Gygi S.P."/>
        </authorList>
    </citation>
    <scope>PHOSPHORYLATION [LARGE SCALE ANALYSIS] AT SER-132 AND THR-378</scope>
    <scope>IDENTIFICATION BY MASS SPECTROMETRY [LARGE SCALE ANALYSIS]</scope>
    <source>
        <tissue>Liver</tissue>
    </source>
</reference>
<reference key="9">
    <citation type="journal article" date="2010" name="Cell">
        <title>A tissue-specific atlas of mouse protein phosphorylation and expression.</title>
        <authorList>
            <person name="Huttlin E.L."/>
            <person name="Jedrychowski M.P."/>
            <person name="Elias J.E."/>
            <person name="Goswami T."/>
            <person name="Rad R."/>
            <person name="Beausoleil S.A."/>
            <person name="Villen J."/>
            <person name="Haas W."/>
            <person name="Sowa M.E."/>
            <person name="Gygi S.P."/>
        </authorList>
    </citation>
    <scope>PHOSPHORYLATION [LARGE SCALE ANALYSIS] AT SER-132</scope>
    <scope>IDENTIFICATION BY MASS SPECTROMETRY [LARGE SCALE ANALYSIS]</scope>
    <source>
        <tissue>Brain</tissue>
        <tissue>Brown adipose tissue</tissue>
        <tissue>Heart</tissue>
        <tissue>Kidney</tissue>
        <tissue>Pancreas</tissue>
        <tissue>Spleen</tissue>
        <tissue>Testis</tissue>
    </source>
</reference>
<reference key="10">
    <citation type="journal article" date="2019" name="J. Immunol.">
        <title>USP20 Promotes Cellular Antiviral Responses via Deconjugating K48-Linked Ubiquitination of MITA.</title>
        <authorList>
            <person name="Zhang M.X."/>
            <person name="Cai Z."/>
            <person name="Zhang M."/>
            <person name="Wang X.M."/>
            <person name="Wang Y."/>
            <person name="Zhao F."/>
            <person name="Zhou J."/>
            <person name="Luo M.H."/>
            <person name="Zhu Q."/>
            <person name="Xu Z."/>
            <person name="Zeng W.B."/>
            <person name="Zhong B."/>
            <person name="Lin D."/>
        </authorList>
    </citation>
    <scope>DISRUPTION PHENOTYPE</scope>
    <scope>SUBCELLULAR LOCATION</scope>
</reference>